<evidence type="ECO:0000255" key="1">
    <source>
        <dbReference type="PROSITE-ProRule" id="PRU00257"/>
    </source>
</evidence>
<dbReference type="EMBL" id="AJ235272">
    <property type="protein sequence ID" value="CAA14949.1"/>
    <property type="molecule type" value="Genomic_DNA"/>
</dbReference>
<dbReference type="PIR" id="C71653">
    <property type="entry name" value="C71653"/>
</dbReference>
<dbReference type="RefSeq" id="NP_220873.1">
    <property type="nucleotide sequence ID" value="NC_000963.1"/>
</dbReference>
<dbReference type="RefSeq" id="WP_004597739.1">
    <property type="nucleotide sequence ID" value="NC_000963.1"/>
</dbReference>
<dbReference type="SMR" id="Q9ZD50"/>
<dbReference type="STRING" id="272947.gene:17555577"/>
<dbReference type="EnsemblBacteria" id="CAA14949">
    <property type="protein sequence ID" value="CAA14949"/>
    <property type="gene ID" value="CAA14949"/>
</dbReference>
<dbReference type="KEGG" id="rpr:RP497"/>
<dbReference type="PATRIC" id="fig|272947.5.peg.506"/>
<dbReference type="eggNOG" id="COG1396">
    <property type="taxonomic scope" value="Bacteria"/>
</dbReference>
<dbReference type="HOGENOM" id="CLU_066192_26_0_5"/>
<dbReference type="OrthoDB" id="9797172at2"/>
<dbReference type="Proteomes" id="UP000002480">
    <property type="component" value="Chromosome"/>
</dbReference>
<dbReference type="GO" id="GO:0003677">
    <property type="term" value="F:DNA binding"/>
    <property type="evidence" value="ECO:0007669"/>
    <property type="project" value="UniProtKB-KW"/>
</dbReference>
<dbReference type="CDD" id="cd00093">
    <property type="entry name" value="HTH_XRE"/>
    <property type="match status" value="1"/>
</dbReference>
<dbReference type="Gene3D" id="1.10.260.40">
    <property type="entry name" value="lambda repressor-like DNA-binding domains"/>
    <property type="match status" value="1"/>
</dbReference>
<dbReference type="InterPro" id="IPR001387">
    <property type="entry name" value="Cro/C1-type_HTH"/>
</dbReference>
<dbReference type="InterPro" id="IPR010982">
    <property type="entry name" value="Lambda_DNA-bd_dom_sf"/>
</dbReference>
<dbReference type="PANTHER" id="PTHR46558">
    <property type="entry name" value="TRACRIPTIONAL REGULATORY PROTEIN-RELATED-RELATED"/>
    <property type="match status" value="1"/>
</dbReference>
<dbReference type="PANTHER" id="PTHR46558:SF3">
    <property type="entry name" value="TRANSCRIPTIONAL REGULATOR"/>
    <property type="match status" value="1"/>
</dbReference>
<dbReference type="Pfam" id="PF01381">
    <property type="entry name" value="HTH_3"/>
    <property type="match status" value="1"/>
</dbReference>
<dbReference type="SMART" id="SM00530">
    <property type="entry name" value="HTH_XRE"/>
    <property type="match status" value="1"/>
</dbReference>
<dbReference type="SUPFAM" id="SSF47413">
    <property type="entry name" value="lambda repressor-like DNA-binding domains"/>
    <property type="match status" value="1"/>
</dbReference>
<dbReference type="PROSITE" id="PS50943">
    <property type="entry name" value="HTH_CROC1"/>
    <property type="match status" value="1"/>
</dbReference>
<reference key="1">
    <citation type="journal article" date="1998" name="Nature">
        <title>The genome sequence of Rickettsia prowazekii and the origin of mitochondria.</title>
        <authorList>
            <person name="Andersson S.G.E."/>
            <person name="Zomorodipour A."/>
            <person name="Andersson J.O."/>
            <person name="Sicheritz-Ponten T."/>
            <person name="Alsmark U.C.M."/>
            <person name="Podowski R.M."/>
            <person name="Naeslund A.K."/>
            <person name="Eriksson A.-S."/>
            <person name="Winkler H.H."/>
            <person name="Kurland C.G."/>
        </authorList>
    </citation>
    <scope>NUCLEOTIDE SEQUENCE [LARGE SCALE GENOMIC DNA]</scope>
    <source>
        <strain>Madrid E</strain>
    </source>
</reference>
<accession>Q9ZD50</accession>
<protein>
    <recommendedName>
        <fullName>Uncharacterized HTH-type transcriptional regulator RP497</fullName>
    </recommendedName>
</protein>
<feature type="chain" id="PRO_0000149781" description="Uncharacterized HTH-type transcriptional regulator RP497">
    <location>
        <begin position="1"/>
        <end position="130"/>
    </location>
</feature>
<feature type="domain" description="HTH cro/C1-type" evidence="1">
    <location>
        <begin position="19"/>
        <end position="73"/>
    </location>
</feature>
<feature type="DNA-binding region" description="H-T-H motif" evidence="1">
    <location>
        <begin position="30"/>
        <end position="49"/>
    </location>
</feature>
<gene>
    <name type="ordered locus">RP497</name>
</gene>
<organism>
    <name type="scientific">Rickettsia prowazekii (strain Madrid E)</name>
    <dbReference type="NCBI Taxonomy" id="272947"/>
    <lineage>
        <taxon>Bacteria</taxon>
        <taxon>Pseudomonadati</taxon>
        <taxon>Pseudomonadota</taxon>
        <taxon>Alphaproteobacteria</taxon>
        <taxon>Rickettsiales</taxon>
        <taxon>Rickettsiaceae</taxon>
        <taxon>Rickettsieae</taxon>
        <taxon>Rickettsia</taxon>
        <taxon>typhus group</taxon>
    </lineage>
</organism>
<keyword id="KW-0238">DNA-binding</keyword>
<keyword id="KW-1185">Reference proteome</keyword>
<keyword id="KW-0804">Transcription</keyword>
<keyword id="KW-0805">Transcription regulation</keyword>
<name>Y497_RICPR</name>
<proteinExistence type="predicted"/>
<sequence length="130" mass="14980">MGRKNDIIQKIDSFIGQKIYSLRLAKGLSRQQLAEVIDVTHQQLQKYEKAINRISVGRLVLIAEALDRNIDYFFEGLEEANKPQPVHTQHQRMCIEVSRNFMKINSTEEQQAINNLVKCLAGKEKLKTNV</sequence>